<organism>
    <name type="scientific">Gallus gallus</name>
    <name type="common">Chicken</name>
    <dbReference type="NCBI Taxonomy" id="9031"/>
    <lineage>
        <taxon>Eukaryota</taxon>
        <taxon>Metazoa</taxon>
        <taxon>Chordata</taxon>
        <taxon>Craniata</taxon>
        <taxon>Vertebrata</taxon>
        <taxon>Euteleostomi</taxon>
        <taxon>Archelosauria</taxon>
        <taxon>Archosauria</taxon>
        <taxon>Dinosauria</taxon>
        <taxon>Saurischia</taxon>
        <taxon>Theropoda</taxon>
        <taxon>Coelurosauria</taxon>
        <taxon>Aves</taxon>
        <taxon>Neognathae</taxon>
        <taxon>Galloanserae</taxon>
        <taxon>Galliformes</taxon>
        <taxon>Phasianidae</taxon>
        <taxon>Phasianinae</taxon>
        <taxon>Gallus</taxon>
    </lineage>
</organism>
<name>E2F1_CHICK</name>
<reference key="1">
    <citation type="journal article" date="1995" name="Oncogene">
        <title>Isolation and characterization of a chicken homolog of the E2F-1 transcription factor.</title>
        <authorList>
            <person name="Pasteau S."/>
            <person name="Loiseau L."/>
            <person name="Arnaud L."/>
            <person name="Trembleau A."/>
            <person name="Brun G."/>
        </authorList>
    </citation>
    <scope>NUCLEOTIDE SEQUENCE [MRNA]</scope>
</reference>
<accession>Q90977</accession>
<gene>
    <name evidence="5" type="primary">E2F1</name>
</gene>
<keyword id="KW-0010">Activator</keyword>
<keyword id="KW-0131">Cell cycle</keyword>
<keyword id="KW-0238">DNA-binding</keyword>
<keyword id="KW-0539">Nucleus</keyword>
<keyword id="KW-1185">Reference proteome</keyword>
<keyword id="KW-0804">Transcription</keyword>
<keyword id="KW-0805">Transcription regulation</keyword>
<protein>
    <recommendedName>
        <fullName evidence="5">Transcription factor E2F1</fullName>
        <shortName evidence="5">E2F-1</shortName>
    </recommendedName>
</protein>
<dbReference type="EMBL" id="X89245">
    <property type="protein sequence ID" value="CAA61533.1"/>
    <property type="molecule type" value="mRNA"/>
</dbReference>
<dbReference type="PIR" id="S58345">
    <property type="entry name" value="S58345"/>
</dbReference>
<dbReference type="RefSeq" id="NP_990550.1">
    <property type="nucleotide sequence ID" value="NM_205219.1"/>
</dbReference>
<dbReference type="SMR" id="Q90977"/>
<dbReference type="FunCoup" id="Q90977">
    <property type="interactions" value="1454"/>
</dbReference>
<dbReference type="STRING" id="9031.ENSGALP00000004806"/>
<dbReference type="PaxDb" id="9031-ENSGALP00000042464"/>
<dbReference type="GeneID" id="396142"/>
<dbReference type="KEGG" id="gga:396142"/>
<dbReference type="CTD" id="1869"/>
<dbReference type="VEuPathDB" id="HostDB:geneid_396142"/>
<dbReference type="eggNOG" id="KOG2577">
    <property type="taxonomic scope" value="Eukaryota"/>
</dbReference>
<dbReference type="InParanoid" id="Q90977"/>
<dbReference type="OrthoDB" id="1743261at2759"/>
<dbReference type="PhylomeDB" id="Q90977"/>
<dbReference type="PRO" id="PR:Q90977"/>
<dbReference type="Proteomes" id="UP000000539">
    <property type="component" value="Unassembled WGS sequence"/>
</dbReference>
<dbReference type="GO" id="GO:0005634">
    <property type="term" value="C:nucleus"/>
    <property type="evidence" value="ECO:0000250"/>
    <property type="project" value="UniProtKB"/>
</dbReference>
<dbReference type="GO" id="GO:0035189">
    <property type="term" value="C:Rb-E2F complex"/>
    <property type="evidence" value="ECO:0000318"/>
    <property type="project" value="GO_Central"/>
</dbReference>
<dbReference type="GO" id="GO:0001216">
    <property type="term" value="F:DNA-binding transcription activator activity"/>
    <property type="evidence" value="ECO:0000250"/>
    <property type="project" value="UniProtKB"/>
</dbReference>
<dbReference type="GO" id="GO:0000981">
    <property type="term" value="F:DNA-binding transcription factor activity, RNA polymerase II-specific"/>
    <property type="evidence" value="ECO:0000318"/>
    <property type="project" value="GO_Central"/>
</dbReference>
<dbReference type="GO" id="GO:0046983">
    <property type="term" value="F:protein dimerization activity"/>
    <property type="evidence" value="ECO:0007669"/>
    <property type="project" value="InterPro"/>
</dbReference>
<dbReference type="GO" id="GO:0000978">
    <property type="term" value="F:RNA polymerase II cis-regulatory region sequence-specific DNA binding"/>
    <property type="evidence" value="ECO:0000318"/>
    <property type="project" value="GO_Central"/>
</dbReference>
<dbReference type="GO" id="GO:0045944">
    <property type="term" value="P:positive regulation of transcription by RNA polymerase II"/>
    <property type="evidence" value="ECO:0000250"/>
    <property type="project" value="UniProtKB"/>
</dbReference>
<dbReference type="GO" id="GO:0006357">
    <property type="term" value="P:regulation of transcription by RNA polymerase II"/>
    <property type="evidence" value="ECO:0000318"/>
    <property type="project" value="GO_Central"/>
</dbReference>
<dbReference type="CDD" id="cd14660">
    <property type="entry name" value="E2F_DD"/>
    <property type="match status" value="1"/>
</dbReference>
<dbReference type="FunFam" id="1.10.10.10:FF:000008">
    <property type="entry name" value="E2F transcription factor 1"/>
    <property type="match status" value="1"/>
</dbReference>
<dbReference type="Gene3D" id="6.10.250.540">
    <property type="match status" value="1"/>
</dbReference>
<dbReference type="Gene3D" id="1.10.10.10">
    <property type="entry name" value="Winged helix-like DNA-binding domain superfamily/Winged helix DNA-binding domain"/>
    <property type="match status" value="1"/>
</dbReference>
<dbReference type="InterPro" id="IPR015633">
    <property type="entry name" value="E2F"/>
</dbReference>
<dbReference type="InterPro" id="IPR037241">
    <property type="entry name" value="E2F-DP_heterodim"/>
</dbReference>
<dbReference type="InterPro" id="IPR032198">
    <property type="entry name" value="E2F_CC-MB"/>
</dbReference>
<dbReference type="InterPro" id="IPR003316">
    <property type="entry name" value="E2F_WHTH_DNA-bd_dom"/>
</dbReference>
<dbReference type="InterPro" id="IPR036388">
    <property type="entry name" value="WH-like_DNA-bd_sf"/>
</dbReference>
<dbReference type="InterPro" id="IPR036390">
    <property type="entry name" value="WH_DNA-bd_sf"/>
</dbReference>
<dbReference type="PANTHER" id="PTHR12081">
    <property type="entry name" value="TRANSCRIPTION FACTOR E2F"/>
    <property type="match status" value="1"/>
</dbReference>
<dbReference type="PANTHER" id="PTHR12081:SF43">
    <property type="entry name" value="TRANSCRIPTION FACTOR E2F1"/>
    <property type="match status" value="1"/>
</dbReference>
<dbReference type="Pfam" id="PF16421">
    <property type="entry name" value="E2F_CC-MB"/>
    <property type="match status" value="1"/>
</dbReference>
<dbReference type="Pfam" id="PF02319">
    <property type="entry name" value="E2F_TDP"/>
    <property type="match status" value="1"/>
</dbReference>
<dbReference type="SMART" id="SM01372">
    <property type="entry name" value="E2F_TDP"/>
    <property type="match status" value="1"/>
</dbReference>
<dbReference type="SUPFAM" id="SSF144074">
    <property type="entry name" value="E2F-DP heterodimerization region"/>
    <property type="match status" value="1"/>
</dbReference>
<dbReference type="SUPFAM" id="SSF46785">
    <property type="entry name" value="Winged helix' DNA-binding domain"/>
    <property type="match status" value="1"/>
</dbReference>
<comment type="function">
    <text evidence="1 2">Transcription activator that binds DNA cooperatively with DP proteins through the E2 recognition site, 5'-TTTC[CG]CGC-3' found in the promoter region of a number of genes whose products are involved in cell cycle regulation or in DNA replication. The DRTF1/E2F complex functions in the control of cell-cycle progression from G1 to S phase. E2F1 binds preferentially RB1 in a cell-cycle dependent manner. It can mediate both cell proliferation and TP53/p53-dependent apoptosis. Blocks adipocyte differentiation by binding to specific promoters repressing CEBPA binding to its target gene promoters. Positively regulates transcription of RRP1B.</text>
</comment>
<comment type="subunit">
    <text evidence="1">Component of the DRTF1/E2F transcription factor complex. Forms heterodimers with DP family members. The E2F1 complex binds specifically hypophosphorylated RB1, the interaction represses E2F1-driven transcription. During the cell cycle, RB1 becomes phosphorylated in mid-to-late G1 phase, detaches from the DRTF1/E2F complex, rendering E2F transcriptionally active. Viral oncoproteins, notably E1A, T-antigen and HPV E7, are capable of sequestering RB1, thus releasing the active complex.</text>
</comment>
<comment type="subcellular location">
    <subcellularLocation>
        <location evidence="1">Nucleus</location>
    </subcellularLocation>
</comment>
<comment type="similarity">
    <text evidence="6">Belongs to the E2F/DP family.</text>
</comment>
<sequence>MATAGGAAGLAALLGGASPHLLIVSASEEPAGGCRPDADLLLFATPQPSRPGPAPRRPALGRPPVKRKLNLETDHQYIAESLPAARGRARIPGRGAKSPGEKSRYETSLNLTTKRFLELLSQSPDGVVDLNWAAEVLKVQKRRIYDITNVLEGIQLITKKSKNNIQWLGSQVAAGASSRQRLLEKELRDLQAAERQLDDLIQTCTVRLRLLTEDPSNQHAAYVTCQDLRSIVDPSEQMVMVIKAPPETQLQVSDPGEAFQVSVRSTQGPIDVFLCPEDSSGVCSPVKSPFKAPAEELSPGSSQQRASPLLHSAQDVNMLLPEALLPGTALPTKCPTEDVSLSPLASMDTLLEHGKDDFPGFLADEFIALSPPQPQDYHFGLEEGEGISELFDCDFGDFTHLDF</sequence>
<proteinExistence type="evidence at transcript level"/>
<evidence type="ECO:0000250" key="1">
    <source>
        <dbReference type="UniProtKB" id="Q01094"/>
    </source>
</evidence>
<evidence type="ECO:0000250" key="2">
    <source>
        <dbReference type="UniProtKB" id="Q61501"/>
    </source>
</evidence>
<evidence type="ECO:0000255" key="3"/>
<evidence type="ECO:0000256" key="4">
    <source>
        <dbReference type="SAM" id="MobiDB-lite"/>
    </source>
</evidence>
<evidence type="ECO:0000303" key="5">
    <source>
    </source>
</evidence>
<evidence type="ECO:0000305" key="6"/>
<feature type="chain" id="PRO_0000219460" description="Transcription factor E2F1">
    <location>
        <begin position="1"/>
        <end position="403"/>
    </location>
</feature>
<feature type="DNA-binding region" evidence="3">
    <location>
        <begin position="87"/>
        <end position="171"/>
    </location>
</feature>
<feature type="region of interest" description="Cyclin A/CDK2 binding" evidence="3">
    <location>
        <begin position="44"/>
        <end position="85"/>
    </location>
</feature>
<feature type="region of interest" description="Disordered" evidence="4">
    <location>
        <begin position="45"/>
        <end position="64"/>
    </location>
</feature>
<feature type="region of interest" description="Leucine-zipper">
    <location>
        <begin position="130"/>
        <end position="151"/>
    </location>
</feature>
<feature type="region of interest" description="Dimerization" evidence="3">
    <location>
        <begin position="172"/>
        <end position="261"/>
    </location>
</feature>
<feature type="region of interest" description="Transactivation" evidence="3">
    <location>
        <begin position="335"/>
        <end position="403"/>
    </location>
</feature>
<feature type="region of interest" description="Retinoblastoma protein RB1 binding" evidence="3">
    <location>
        <begin position="375"/>
        <end position="392"/>
    </location>
</feature>
<feature type="short sequence motif" description="DEF box">
    <location>
        <begin position="135"/>
        <end position="171"/>
    </location>
</feature>